<reference key="1">
    <citation type="journal article" date="1998" name="Science">
        <title>Genome sequence of the nematode C. elegans: a platform for investigating biology.</title>
        <authorList>
            <consortium name="The C. elegans sequencing consortium"/>
        </authorList>
    </citation>
    <scope>NUCLEOTIDE SEQUENCE [LARGE SCALE GENOMIC DNA]</scope>
    <source>
        <strain>Bristol N2</strain>
    </source>
</reference>
<gene>
    <name type="primary">pqn-25</name>
    <name type="ORF">D1044.3</name>
</gene>
<protein>
    <recommendedName>
        <fullName>Prion-like-(Q/N-rich) domain-bearing protein 25</fullName>
    </recommendedName>
    <alternativeName>
        <fullName>Glutamine/asparagine-rich protein pqn-25</fullName>
    </alternativeName>
</protein>
<organism>
    <name type="scientific">Caenorhabditis elegans</name>
    <dbReference type="NCBI Taxonomy" id="6239"/>
    <lineage>
        <taxon>Eukaryota</taxon>
        <taxon>Metazoa</taxon>
        <taxon>Ecdysozoa</taxon>
        <taxon>Nematoda</taxon>
        <taxon>Chromadorea</taxon>
        <taxon>Rhabditida</taxon>
        <taxon>Rhabditina</taxon>
        <taxon>Rhabditomorpha</taxon>
        <taxon>Rhabditoidea</taxon>
        <taxon>Rhabditidae</taxon>
        <taxon>Peloderinae</taxon>
        <taxon>Caenorhabditis</taxon>
    </lineage>
</organism>
<name>PQN25_CAEEL</name>
<accession>P41951</accession>
<accession>Q95QP7</accession>
<dbReference type="EMBL" id="FO081000">
    <property type="protein sequence ID" value="CCD68371.1"/>
    <property type="molecule type" value="Genomic_DNA"/>
</dbReference>
<dbReference type="RefSeq" id="NP_741140.1">
    <property type="nucleotide sequence ID" value="NM_171123.6"/>
</dbReference>
<dbReference type="FunCoup" id="P41951">
    <property type="interactions" value="1"/>
</dbReference>
<dbReference type="STRING" id="6239.D1044.3.1"/>
<dbReference type="PaxDb" id="6239-D1044.3"/>
<dbReference type="EnsemblMetazoa" id="D1044.3.1">
    <property type="protein sequence ID" value="D1044.3.1"/>
    <property type="gene ID" value="WBGene00004114"/>
</dbReference>
<dbReference type="GeneID" id="175759"/>
<dbReference type="KEGG" id="cel:CELE_D1044.3"/>
<dbReference type="UCSC" id="D1044.3">
    <property type="organism name" value="c. elegans"/>
</dbReference>
<dbReference type="AGR" id="WB:WBGene00004114"/>
<dbReference type="CTD" id="175759"/>
<dbReference type="WormBase" id="D1044.3">
    <property type="protein sequence ID" value="CE29743"/>
    <property type="gene ID" value="WBGene00004114"/>
    <property type="gene designation" value="pqn-25"/>
</dbReference>
<dbReference type="eggNOG" id="KOG1218">
    <property type="taxonomic scope" value="Eukaryota"/>
</dbReference>
<dbReference type="GeneTree" id="ENSGT00970000196038"/>
<dbReference type="HOGENOM" id="CLU_408948_0_0_1"/>
<dbReference type="InParanoid" id="P41951"/>
<dbReference type="OMA" id="QCLNSIC"/>
<dbReference type="OrthoDB" id="5874482at2759"/>
<dbReference type="PhylomeDB" id="P41951"/>
<dbReference type="PRO" id="PR:P41951"/>
<dbReference type="Proteomes" id="UP000001940">
    <property type="component" value="Chromosome III"/>
</dbReference>
<dbReference type="Bgee" id="WBGene00004114">
    <property type="expression patterns" value="Expressed in larva and 5 other cell types or tissues"/>
</dbReference>
<dbReference type="GO" id="GO:0016020">
    <property type="term" value="C:membrane"/>
    <property type="evidence" value="ECO:0007669"/>
    <property type="project" value="UniProtKB-SubCell"/>
</dbReference>
<dbReference type="InterPro" id="IPR006150">
    <property type="entry name" value="Cys_repeat_1"/>
</dbReference>
<dbReference type="InterPro" id="IPR006149">
    <property type="entry name" value="EB_dom"/>
</dbReference>
<dbReference type="PANTHER" id="PTHR37157:SF2">
    <property type="entry name" value="EB DOMAIN-CONTAINING PROTEIN-RELATED"/>
    <property type="match status" value="1"/>
</dbReference>
<dbReference type="PANTHER" id="PTHR37157">
    <property type="entry name" value="PRION-LIKE-(Q/N-RICH) DOMAIN-BEARING PROTEIN 25"/>
    <property type="match status" value="1"/>
</dbReference>
<dbReference type="Pfam" id="PF01683">
    <property type="entry name" value="EB"/>
    <property type="match status" value="8"/>
</dbReference>
<dbReference type="SMART" id="SM00289">
    <property type="entry name" value="WR1"/>
    <property type="match status" value="11"/>
</dbReference>
<keyword id="KW-0472">Membrane</keyword>
<keyword id="KW-1185">Reference proteome</keyword>
<keyword id="KW-0812">Transmembrane</keyword>
<keyword id="KW-1133">Transmembrane helix</keyword>
<sequence length="672" mass="71395">MEETCSESPKESNIISFIWHKLLKRVPPPIMICLFFLLLQIFVISVVSQCPPGLTPLFSNSNFNQPLTCTPQDACSCYSSSGSSRFGTICQYASTYNNYICCYSTNTQCGSNSSPQVSASGQVVTCSTNTQCASGYTCNNGACCPNTNSNTCSSNGNNGCLAGQTMVNGQCYNSVNIGSACQSTQQCLGGSQCQNNICQCYSGYVNVNQQCVISNGLNCQLGTVSYNSQCITLASPGQNCQTSSQCIDNSVCMNQMCTCNNNYRLVYGYCVPITSSICQQTQTLVNNQCVLLSIVGETCIANQQCVGGAMCNSGTCQCTNGATAMYGYCISSSSSSCNSNQVSINGMCYNTVQVGGSCSFSQQCLNNAVCTNNICVSTFCSVSCSTNQVCISNQCYNYVSIGSQCVGSQQCLSNSQCISSICQCPQGTQQSNGVCTGNNNNNNQCQPNQVLINNQCYNTVSIGFQCQFPQQCLGNSQCMNSMCQCPTGSTNVNGYCQGGSNGQCNSNQVLINNQCYNTVSIGFQCQFAQQCLGNSQCLNSICQCPSGSSNVNGYCQGGSNGQCNSNQVYYNNQCYNTVPIGSQCQITQQCLGNSQCMNSFCQCPSGTTNVNNFCTTSSSSSNLCSAGQTVQLDSSNQPINCLVSTCPNNSFCQYSSSGQRYVCCRSTSGKKK</sequence>
<comment type="subcellular location">
    <subcellularLocation>
        <location evidence="2">Membrane</location>
        <topology evidence="2">Single-pass membrane protein</topology>
    </subcellularLocation>
</comment>
<evidence type="ECO:0000255" key="1"/>
<evidence type="ECO:0000305" key="2"/>
<feature type="chain" id="PRO_0000058558" description="Prion-like-(Q/N-rich) domain-bearing protein 25">
    <location>
        <begin position="1"/>
        <end position="672"/>
    </location>
</feature>
<feature type="transmembrane region" description="Helical" evidence="1">
    <location>
        <begin position="26"/>
        <end position="46"/>
    </location>
</feature>
<proteinExistence type="predicted"/>